<keyword id="KW-0002">3D-structure</keyword>
<keyword id="KW-0903">Direct protein sequencing</keyword>
<keyword id="KW-1185">Reference proteome</keyword>
<keyword id="KW-0946">Virion</keyword>
<organismHost>
    <name type="scientific">Acinetobacter calcoaceticus</name>
    <dbReference type="NCBI Taxonomy" id="471"/>
</organismHost>
<organismHost>
    <name type="scientific">Escherichia coli</name>
    <dbReference type="NCBI Taxonomy" id="562"/>
</organismHost>
<organismHost>
    <name type="scientific">Proteus mirabilis</name>
    <dbReference type="NCBI Taxonomy" id="584"/>
</organismHost>
<organismHost>
    <name type="scientific">Pseudomonas aeruginosa</name>
    <dbReference type="NCBI Taxonomy" id="287"/>
</organismHost>
<organismHost>
    <name type="scientific">Pseudomonas fluorescens</name>
    <dbReference type="NCBI Taxonomy" id="294"/>
</organismHost>
<organismHost>
    <name type="scientific">Pseudomonas putida</name>
    <name type="common">Arthrobacter siderocapsulatus</name>
    <dbReference type="NCBI Taxonomy" id="303"/>
</organismHost>
<organismHost>
    <name type="scientific">Salmonella typhimurium</name>
    <dbReference type="NCBI Taxonomy" id="90371"/>
</organismHost>
<organismHost>
    <name type="scientific">Vibrio cholerae</name>
    <dbReference type="NCBI Taxonomy" id="666"/>
</organismHost>
<sequence>MNVNNPNQMTVTPVYNGCDSGEGPQSVRGYFDAVAGENVKYDLTYLADTQGFTGVQCIYIDNAENDGAFEIDVEETGQRIKCPAGKQGYFPLLVPGRAKFVARHLGSGKKSVPLFFLNFTIAQGVW</sequence>
<organism>
    <name type="scientific">Enterobacteria phage PRD1</name>
    <name type="common">Bacteriophage PRD1</name>
    <dbReference type="NCBI Taxonomy" id="10658"/>
    <lineage>
        <taxon>Viruses</taxon>
        <taxon>Varidnaviria</taxon>
        <taxon>Bamfordvirae</taxon>
        <taxon>Preplasmiviricota</taxon>
        <taxon>Tectiliviricetes</taxon>
        <taxon>Kalamavirales</taxon>
        <taxon>Tectiviridae</taxon>
        <taxon>Alphatectivirus</taxon>
        <taxon>Alphatectivirus PRD1</taxon>
    </lineage>
</organism>
<feature type="chain" id="PRO_0000165357" description="Penton protein P31">
    <location>
        <begin position="1"/>
        <end position="126"/>
    </location>
</feature>
<dbReference type="EMBL" id="AY848689">
    <property type="protein sequence ID" value="AAX45918.1"/>
    <property type="molecule type" value="Genomic_DNA"/>
</dbReference>
<dbReference type="PIR" id="E40477">
    <property type="entry name" value="WMBPQC"/>
</dbReference>
<dbReference type="RefSeq" id="NP_040685.1">
    <property type="nucleotide sequence ID" value="NC_001421.2"/>
</dbReference>
<dbReference type="RefSeq" id="YP_009639959.1">
    <property type="nucleotide sequence ID" value="NC_001421.2"/>
</dbReference>
<dbReference type="PDB" id="1W8X">
    <property type="method" value="X-ray"/>
    <property type="resolution" value="4.20 A"/>
    <property type="chains" value="N=1-126"/>
</dbReference>
<dbReference type="PDBsum" id="1W8X"/>
<dbReference type="SMR" id="P27384"/>
<dbReference type="GeneID" id="1260938"/>
<dbReference type="OrthoDB" id="31781at10239"/>
<dbReference type="EvolutionaryTrace" id="P27384"/>
<dbReference type="Proteomes" id="UP000002143">
    <property type="component" value="Segment"/>
</dbReference>
<dbReference type="GO" id="GO:0019028">
    <property type="term" value="C:viral capsid"/>
    <property type="evidence" value="ECO:0000314"/>
    <property type="project" value="CACAO"/>
</dbReference>
<dbReference type="InterPro" id="IPR015043">
    <property type="entry name" value="Phage_PRD1_P5_spike_N"/>
</dbReference>
<dbReference type="Pfam" id="PF08948">
    <property type="entry name" value="PRD1_P5_spike_N"/>
    <property type="match status" value="1"/>
</dbReference>
<reference key="1">
    <citation type="journal article" date="1991" name="Virology">
        <title>Genome organization of membrane-containing bacteriophage PRD1.</title>
        <authorList>
            <person name="Bamford J.K.H."/>
            <person name="Haenninen A.-L."/>
            <person name="Pakula T.M."/>
            <person name="Ojala P.M."/>
            <person name="Kalkkinen N."/>
            <person name="Frilander M."/>
            <person name="Bamford D.H."/>
        </authorList>
    </citation>
    <scope>NUCLEOTIDE SEQUENCE [GENOMIC DNA]</scope>
    <scope>PROTEIN SEQUENCE OF 28-40</scope>
</reference>
<reference key="2">
    <citation type="journal article" date="2005" name="J. Mol. Biol.">
        <title>A snapshot of viral evolution from genome analysis of the tectiviridae family.</title>
        <authorList>
            <person name="Saren A.M."/>
            <person name="Ravantti J.J."/>
            <person name="Benson S.D."/>
            <person name="Burnett R.M."/>
            <person name="Paulin L."/>
            <person name="Bamford D.H."/>
            <person name="Bamford J.K.H."/>
        </authorList>
    </citation>
    <scope>NUCLEOTIDE SEQUENCE [GENOMIC DNA]</scope>
</reference>
<reference key="3">
    <citation type="journal article" date="2001" name="J. Biol. Chem.">
        <title>Solution structure of bacteriophage PRD1 vertex complex.</title>
        <authorList>
            <person name="Sokolova A."/>
            <person name="Malfois M."/>
            <person name="Caldentey J."/>
            <person name="Svergun D.I."/>
            <person name="Koch M.H."/>
            <person name="Bamford D.H."/>
            <person name="Tuma R."/>
        </authorList>
    </citation>
    <scope>FUNCTION</scope>
</reference>
<reference key="4">
    <citation type="journal article" date="2004" name="Nature">
        <title>Insights into assembly from structural analysis of bacteriophage PRD1.</title>
        <authorList>
            <person name="Abrescia N.G.A."/>
            <person name="Cockburn J.J.B."/>
            <person name="Grimes J.M."/>
            <person name="Sutton G.C."/>
            <person name="Diprose J.M."/>
            <person name="Butcher S.J."/>
            <person name="Fuller S.D."/>
            <person name="San Martin C."/>
            <person name="Burnett R.M."/>
            <person name="Stuart D.I."/>
            <person name="Bamford D.H."/>
            <person name="Bamford J.K.H."/>
        </authorList>
    </citation>
    <scope>X-RAY CRYSTALLOGRAPHY (4.2 ANGSTROMS)</scope>
</reference>
<accession>P27384</accession>
<accession>Q3T4P1</accession>
<comment type="function">
    <text evidence="1">In association with P2 and trimeric P5, forms the spike complexes located at the 5-fold vertices of the capsid. Essential for viral infectivity.</text>
</comment>
<comment type="subcellular location">
    <subcellularLocation>
        <location>Virion</location>
    </subcellularLocation>
</comment>
<gene>
    <name type="primary">XXXI</name>
    <name type="synonym">C</name>
</gene>
<name>VP31_BPPRD</name>
<evidence type="ECO:0000269" key="1">
    <source>
    </source>
</evidence>
<protein>
    <recommendedName>
        <fullName>Penton protein P31</fullName>
    </recommendedName>
    <alternativeName>
        <fullName>GpC</fullName>
    </alternativeName>
    <alternativeName>
        <fullName>Protein C</fullName>
    </alternativeName>
</protein>
<proteinExistence type="evidence at protein level"/>